<name>EMO1_CAEEL</name>
<gene>
    <name evidence="7" type="primary">sec-61.G</name>
    <name evidence="5 7" type="synonym">emo-1</name>
    <name evidence="7" type="synonym">oar-1</name>
    <name evidence="7" type="ORF">F32D8.6</name>
</gene>
<organism>
    <name type="scientific">Caenorhabditis elegans</name>
    <dbReference type="NCBI Taxonomy" id="6239"/>
    <lineage>
        <taxon>Eukaryota</taxon>
        <taxon>Metazoa</taxon>
        <taxon>Ecdysozoa</taxon>
        <taxon>Nematoda</taxon>
        <taxon>Chromadorea</taxon>
        <taxon>Rhabditida</taxon>
        <taxon>Rhabditina</taxon>
        <taxon>Rhabditomorpha</taxon>
        <taxon>Rhabditoidea</taxon>
        <taxon>Rhabditidae</taxon>
        <taxon>Peloderinae</taxon>
        <taxon>Caenorhabditis</taxon>
    </lineage>
</organism>
<protein>
    <recommendedName>
        <fullName>Protein transport protein Sec61 subunit gamma</fullName>
    </recommendedName>
</protein>
<dbReference type="EMBL" id="U53785">
    <property type="protein sequence ID" value="AAC47274.1"/>
    <property type="molecule type" value="Genomic_DNA"/>
</dbReference>
<dbReference type="EMBL" id="BX284605">
    <property type="protein sequence ID" value="CAA98458.1"/>
    <property type="molecule type" value="Genomic_DNA"/>
</dbReference>
<dbReference type="PIR" id="T21656">
    <property type="entry name" value="T21656"/>
</dbReference>
<dbReference type="RefSeq" id="NP_001379136.1">
    <property type="nucleotide sequence ID" value="NM_001392601.1"/>
</dbReference>
<dbReference type="RefSeq" id="NP_505778.1">
    <property type="nucleotide sequence ID" value="NM_073377.5"/>
</dbReference>
<dbReference type="SMR" id="Q19967"/>
<dbReference type="BioGRID" id="44538">
    <property type="interactions" value="3"/>
</dbReference>
<dbReference type="FunCoup" id="Q19967">
    <property type="interactions" value="1328"/>
</dbReference>
<dbReference type="STRING" id="6239.F32D8.6.1"/>
<dbReference type="PaxDb" id="6239-F32D8.6"/>
<dbReference type="PeptideAtlas" id="Q19967"/>
<dbReference type="EnsemblMetazoa" id="F32D8.6.1">
    <property type="protein sequence ID" value="F32D8.6.1"/>
    <property type="gene ID" value="WBGene00001303"/>
</dbReference>
<dbReference type="GeneID" id="179510"/>
<dbReference type="UCSC" id="F32D8.6.1">
    <property type="organism name" value="c. elegans"/>
</dbReference>
<dbReference type="AGR" id="WB:WBGene00001303"/>
<dbReference type="WormBase" id="F32D8.6">
    <property type="protein sequence ID" value="CE05785"/>
    <property type="gene ID" value="WBGene00001303"/>
    <property type="gene designation" value="sec-61.G"/>
</dbReference>
<dbReference type="eggNOG" id="KOG3498">
    <property type="taxonomic scope" value="Eukaryota"/>
</dbReference>
<dbReference type="GeneTree" id="ENSGT00390000001319"/>
<dbReference type="HOGENOM" id="CLU_167752_2_0_1"/>
<dbReference type="InParanoid" id="Q19967"/>
<dbReference type="OMA" id="KPDQKEY"/>
<dbReference type="OrthoDB" id="2401875at2759"/>
<dbReference type="PhylomeDB" id="Q19967"/>
<dbReference type="Reactome" id="R-CEL-9609523">
    <property type="pathway name" value="Insertion of tail-anchored proteins into the endoplasmic reticulum membrane"/>
</dbReference>
<dbReference type="PRO" id="PR:Q19967"/>
<dbReference type="Proteomes" id="UP000001940">
    <property type="component" value="Chromosome V"/>
</dbReference>
<dbReference type="Bgee" id="WBGene00001303">
    <property type="expression patterns" value="Expressed in pharyngeal muscle cell (C elegans) and 4 other cell types or tissues"/>
</dbReference>
<dbReference type="GO" id="GO:0005784">
    <property type="term" value="C:Sec61 translocon complex"/>
    <property type="evidence" value="ECO:0000250"/>
    <property type="project" value="WormBase"/>
</dbReference>
<dbReference type="GO" id="GO:0071261">
    <property type="term" value="C:Ssh1 translocon complex"/>
    <property type="evidence" value="ECO:0000318"/>
    <property type="project" value="GO_Central"/>
</dbReference>
<dbReference type="GO" id="GO:0008320">
    <property type="term" value="F:protein transmembrane transporter activity"/>
    <property type="evidence" value="ECO:0000318"/>
    <property type="project" value="GO_Central"/>
</dbReference>
<dbReference type="GO" id="GO:0015450">
    <property type="term" value="F:protein-transporting ATPase activity"/>
    <property type="evidence" value="ECO:0000250"/>
    <property type="project" value="WormBase"/>
</dbReference>
<dbReference type="GO" id="GO:0006886">
    <property type="term" value="P:intracellular protein transport"/>
    <property type="evidence" value="ECO:0000304"/>
    <property type="project" value="WormBase"/>
</dbReference>
<dbReference type="GO" id="GO:0001555">
    <property type="term" value="P:oocyte growth"/>
    <property type="evidence" value="ECO:0000315"/>
    <property type="project" value="WormBase"/>
</dbReference>
<dbReference type="GO" id="GO:0030728">
    <property type="term" value="P:ovulation"/>
    <property type="evidence" value="ECO:0000315"/>
    <property type="project" value="WormBase"/>
</dbReference>
<dbReference type="GO" id="GO:0031204">
    <property type="term" value="P:post-translational protein targeting to membrane, translocation"/>
    <property type="evidence" value="ECO:0000318"/>
    <property type="project" value="GO_Central"/>
</dbReference>
<dbReference type="FunFam" id="1.20.5.820:FF:000001">
    <property type="entry name" value="Transport protein Sec61 subunit gamma"/>
    <property type="match status" value="1"/>
</dbReference>
<dbReference type="Gene3D" id="1.20.5.820">
    <property type="entry name" value="Preprotein translocase SecE subunit"/>
    <property type="match status" value="1"/>
</dbReference>
<dbReference type="HAMAP" id="MF_00422">
    <property type="entry name" value="SecE"/>
    <property type="match status" value="1"/>
</dbReference>
<dbReference type="InterPro" id="IPR023391">
    <property type="entry name" value="Prot_translocase_SecE_dom_sf"/>
</dbReference>
<dbReference type="InterPro" id="IPR008158">
    <property type="entry name" value="Translocase_Sec61-g"/>
</dbReference>
<dbReference type="InterPro" id="IPR001901">
    <property type="entry name" value="Translocase_SecE/Sec61-g"/>
</dbReference>
<dbReference type="NCBIfam" id="TIGR00327">
    <property type="entry name" value="secE_euk_arch"/>
    <property type="match status" value="1"/>
</dbReference>
<dbReference type="PANTHER" id="PTHR12309">
    <property type="entry name" value="SEC61 GAMMA SUBUNIT"/>
    <property type="match status" value="1"/>
</dbReference>
<dbReference type="Pfam" id="PF00584">
    <property type="entry name" value="SecE"/>
    <property type="match status" value="1"/>
</dbReference>
<dbReference type="SUPFAM" id="SSF103456">
    <property type="entry name" value="Preprotein translocase SecE subunit"/>
    <property type="match status" value="1"/>
</dbReference>
<dbReference type="PROSITE" id="PS01067">
    <property type="entry name" value="SECE_SEC61G"/>
    <property type="match status" value="1"/>
</dbReference>
<sequence length="68" mass="7761">MDQFQALIEPARQFSKDSYRLVKRCTKPDRKEYQKIAMATAIGFAIMGFIGFFVKLIHIPINNIIVGA</sequence>
<evidence type="ECO:0000250" key="1"/>
<evidence type="ECO:0000255" key="2"/>
<evidence type="ECO:0000269" key="3">
    <source>
    </source>
</evidence>
<evidence type="ECO:0000269" key="4">
    <source>
    </source>
</evidence>
<evidence type="ECO:0000303" key="5">
    <source>
    </source>
</evidence>
<evidence type="ECO:0000305" key="6"/>
<evidence type="ECO:0000312" key="7">
    <source>
        <dbReference type="WormBase" id="F32D8.6"/>
    </source>
</evidence>
<accession>Q19967</accession>
<keyword id="KW-0217">Developmental protein</keyword>
<keyword id="KW-0221">Differentiation</keyword>
<keyword id="KW-0256">Endoplasmic reticulum</keyword>
<keyword id="KW-0472">Membrane</keyword>
<keyword id="KW-0896">Oogenesis</keyword>
<keyword id="KW-0653">Protein transport</keyword>
<keyword id="KW-1185">Reference proteome</keyword>
<keyword id="KW-0811">Translocation</keyword>
<keyword id="KW-0812">Transmembrane</keyword>
<keyword id="KW-1133">Transmembrane helix</keyword>
<keyword id="KW-0813">Transport</keyword>
<reference key="1">
    <citation type="journal article" date="1996" name="J. Cell Biol.">
        <title>emo-1, a Caenorhabditis elegans Sec61p gamma homologue, is required for oocyte development and ovulation.</title>
        <authorList>
            <person name="Iwasaki K."/>
            <person name="McCarter J."/>
            <person name="Francis R."/>
            <person name="Schedl T."/>
        </authorList>
    </citation>
    <scope>NUCLEOTIDE SEQUENCE [GENOMIC DNA]</scope>
    <scope>FUNCTION</scope>
    <scope>TISSUE SPECIFICITY</scope>
    <source>
        <strain>Bristol N2</strain>
    </source>
</reference>
<reference key="2">
    <citation type="journal article" date="1998" name="Science">
        <title>Genome sequence of the nematode C. elegans: a platform for investigating biology.</title>
        <authorList>
            <consortium name="The C. elegans sequencing consortium"/>
        </authorList>
    </citation>
    <scope>NUCLEOTIDE SEQUENCE [LARGE SCALE GENOMIC DNA]</scope>
    <source>
        <strain>Bristol N2</strain>
    </source>
</reference>
<reference key="3">
    <citation type="journal article" date="2003" name="Genes Dev.">
        <title>An Eph receptor sperm-sensing control mechanism for oocyte meiotic maturation in Caenorhabditis elegans.</title>
        <authorList>
            <person name="Miller M.A."/>
            <person name="Ruest P.J."/>
            <person name="Kosinski M."/>
            <person name="Hanks S.K."/>
            <person name="Greenstein D."/>
        </authorList>
    </citation>
    <scope>FUNCTION</scope>
</reference>
<proteinExistence type="evidence at transcript level"/>
<comment type="function">
    <text evidence="3 4">Required for oocyte development and ovulation (PubMed:12533508, PubMed:8707849). Required for the translocation of secretory and transmembrane proteins into the endoplasmic reticulum in vitro (PubMed:8707849).</text>
</comment>
<comment type="subunit">
    <text evidence="1">Heterotrimeric complex composed of SEC61-alpha, SEC61-beta and SEC61-gamma.</text>
</comment>
<comment type="subcellular location">
    <subcellularLocation>
        <location evidence="6">Endoplasmic reticulum membrane</location>
        <topology evidence="6">Single-pass membrane protein</topology>
    </subcellularLocation>
</comment>
<comment type="tissue specificity">
    <text evidence="4">Expressed in the germline (PubMed:8707849). Expression in the germline is regulated in a sex- and meiotic cycle stage-specific manner (PubMed:8707849). Expressed in somatic tissues including the intestine and somatic gonad (PubMed:8707849). Expressed in the intestine more highly in hermaprodites than in males (PubMed:8707849). In hermaphrodites, weakly expressed in the spermatheca (PubMed:8707849).</text>
</comment>
<comment type="similarity">
    <text evidence="6">Belongs to the SecE/SEC61-gamma family.</text>
</comment>
<feature type="chain" id="PRO_0000104200" description="Protein transport protein Sec61 subunit gamma">
    <location>
        <begin position="1"/>
        <end position="68"/>
    </location>
</feature>
<feature type="topological domain" description="Cytoplasmic" evidence="2">
    <location>
        <begin position="1"/>
        <end position="32"/>
    </location>
</feature>
<feature type="transmembrane region" description="Helical" evidence="2">
    <location>
        <begin position="33"/>
        <end position="61"/>
    </location>
</feature>
<feature type="topological domain" description="Extracellular" evidence="2">
    <location>
        <begin position="62"/>
        <end position="68"/>
    </location>
</feature>